<gene>
    <name evidence="1" type="primary">rpsR</name>
    <name type="ordered locus">BCc_369</name>
</gene>
<evidence type="ECO:0000255" key="1">
    <source>
        <dbReference type="HAMAP-Rule" id="MF_00270"/>
    </source>
</evidence>
<evidence type="ECO:0000305" key="2"/>
<accession>Q056X9</accession>
<feature type="chain" id="PRO_1000003456" description="Small ribosomal subunit protein bS18">
    <location>
        <begin position="1"/>
        <end position="75"/>
    </location>
</feature>
<proteinExistence type="inferred from homology"/>
<comment type="function">
    <text evidence="1">Binds as a heterodimer with protein bS6 to the central domain of the 16S rRNA, where it helps stabilize the platform of the 30S subunit.</text>
</comment>
<comment type="subunit">
    <text evidence="1">Part of the 30S ribosomal subunit. Forms a tight heterodimer with protein bS6.</text>
</comment>
<comment type="similarity">
    <text evidence="1">Belongs to the bacterial ribosomal protein bS18 family.</text>
</comment>
<keyword id="KW-1185">Reference proteome</keyword>
<keyword id="KW-0687">Ribonucleoprotein</keyword>
<keyword id="KW-0689">Ribosomal protein</keyword>
<keyword id="KW-0694">RNA-binding</keyword>
<keyword id="KW-0699">rRNA-binding</keyword>
<protein>
    <recommendedName>
        <fullName evidence="1">Small ribosomal subunit protein bS18</fullName>
    </recommendedName>
    <alternativeName>
        <fullName evidence="2">30S ribosomal protein S18</fullName>
    </alternativeName>
</protein>
<organism>
    <name type="scientific">Buchnera aphidicola subsp. Cinara cedri (strain Cc)</name>
    <dbReference type="NCBI Taxonomy" id="372461"/>
    <lineage>
        <taxon>Bacteria</taxon>
        <taxon>Pseudomonadati</taxon>
        <taxon>Pseudomonadota</taxon>
        <taxon>Gammaproteobacteria</taxon>
        <taxon>Enterobacterales</taxon>
        <taxon>Erwiniaceae</taxon>
        <taxon>Buchnera</taxon>
    </lineage>
</organism>
<sequence length="75" mass="9032">MVRYFRRRKFCRFTAEGIKKIDYKDIMILKNYITENGKIVPSRITGTKAKYQRQLSRAIKIARFLGFIPYTDQHK</sequence>
<reference key="1">
    <citation type="journal article" date="2006" name="Science">
        <title>A small microbial genome: the end of a long symbiotic relationship?</title>
        <authorList>
            <person name="Perez-Brocal V."/>
            <person name="Gil R."/>
            <person name="Ramos S."/>
            <person name="Lamelas A."/>
            <person name="Postigo M."/>
            <person name="Michelena J.M."/>
            <person name="Silva F.J."/>
            <person name="Moya A."/>
            <person name="Latorre A."/>
        </authorList>
    </citation>
    <scope>NUCLEOTIDE SEQUENCE [LARGE SCALE GENOMIC DNA]</scope>
    <source>
        <strain>Cc</strain>
    </source>
</reference>
<name>RS18_BUCCC</name>
<dbReference type="EMBL" id="CP000263">
    <property type="protein sequence ID" value="ABJ90820.1"/>
    <property type="molecule type" value="Genomic_DNA"/>
</dbReference>
<dbReference type="RefSeq" id="WP_011672739.1">
    <property type="nucleotide sequence ID" value="NC_008513.1"/>
</dbReference>
<dbReference type="SMR" id="Q056X9"/>
<dbReference type="STRING" id="372461.BCc_369"/>
<dbReference type="KEGG" id="bcc:BCc_369"/>
<dbReference type="eggNOG" id="COG0238">
    <property type="taxonomic scope" value="Bacteria"/>
</dbReference>
<dbReference type="HOGENOM" id="CLU_148710_2_3_6"/>
<dbReference type="OrthoDB" id="9812008at2"/>
<dbReference type="Proteomes" id="UP000000669">
    <property type="component" value="Chromosome"/>
</dbReference>
<dbReference type="GO" id="GO:0022627">
    <property type="term" value="C:cytosolic small ribosomal subunit"/>
    <property type="evidence" value="ECO:0007669"/>
    <property type="project" value="TreeGrafter"/>
</dbReference>
<dbReference type="GO" id="GO:0070181">
    <property type="term" value="F:small ribosomal subunit rRNA binding"/>
    <property type="evidence" value="ECO:0007669"/>
    <property type="project" value="TreeGrafter"/>
</dbReference>
<dbReference type="GO" id="GO:0003735">
    <property type="term" value="F:structural constituent of ribosome"/>
    <property type="evidence" value="ECO:0007669"/>
    <property type="project" value="InterPro"/>
</dbReference>
<dbReference type="GO" id="GO:0006412">
    <property type="term" value="P:translation"/>
    <property type="evidence" value="ECO:0007669"/>
    <property type="project" value="UniProtKB-UniRule"/>
</dbReference>
<dbReference type="FunFam" id="4.10.640.10:FF:000001">
    <property type="entry name" value="30S ribosomal protein S18"/>
    <property type="match status" value="1"/>
</dbReference>
<dbReference type="Gene3D" id="4.10.640.10">
    <property type="entry name" value="Ribosomal protein S18"/>
    <property type="match status" value="1"/>
</dbReference>
<dbReference type="HAMAP" id="MF_00270">
    <property type="entry name" value="Ribosomal_bS18"/>
    <property type="match status" value="1"/>
</dbReference>
<dbReference type="InterPro" id="IPR001648">
    <property type="entry name" value="Ribosomal_bS18"/>
</dbReference>
<dbReference type="InterPro" id="IPR018275">
    <property type="entry name" value="Ribosomal_bS18_CS"/>
</dbReference>
<dbReference type="InterPro" id="IPR036870">
    <property type="entry name" value="Ribosomal_bS18_sf"/>
</dbReference>
<dbReference type="NCBIfam" id="TIGR00165">
    <property type="entry name" value="S18"/>
    <property type="match status" value="1"/>
</dbReference>
<dbReference type="PANTHER" id="PTHR13479">
    <property type="entry name" value="30S RIBOSOMAL PROTEIN S18"/>
    <property type="match status" value="1"/>
</dbReference>
<dbReference type="PANTHER" id="PTHR13479:SF40">
    <property type="entry name" value="SMALL RIBOSOMAL SUBUNIT PROTEIN BS18M"/>
    <property type="match status" value="1"/>
</dbReference>
<dbReference type="Pfam" id="PF01084">
    <property type="entry name" value="Ribosomal_S18"/>
    <property type="match status" value="1"/>
</dbReference>
<dbReference type="PRINTS" id="PR00974">
    <property type="entry name" value="RIBOSOMALS18"/>
</dbReference>
<dbReference type="SUPFAM" id="SSF46911">
    <property type="entry name" value="Ribosomal protein S18"/>
    <property type="match status" value="1"/>
</dbReference>
<dbReference type="PROSITE" id="PS00057">
    <property type="entry name" value="RIBOSOMAL_S18"/>
    <property type="match status" value="1"/>
</dbReference>